<dbReference type="EMBL" id="AF506821">
    <property type="protein sequence ID" value="AAM33635.1"/>
    <property type="molecule type" value="mRNA"/>
</dbReference>
<dbReference type="EMBL" id="BC050915">
    <property type="protein sequence ID" value="AAH50915.1"/>
    <property type="molecule type" value="mRNA"/>
</dbReference>
<dbReference type="EMBL" id="BC060683">
    <property type="protein sequence ID" value="AAH60683.1"/>
    <property type="molecule type" value="mRNA"/>
</dbReference>
<dbReference type="EMBL" id="AK049595">
    <property type="protein sequence ID" value="BAC33833.1"/>
    <property type="molecule type" value="mRNA"/>
</dbReference>
<dbReference type="EMBL" id="AK165251">
    <property type="protein sequence ID" value="BAE38105.1"/>
    <property type="molecule type" value="mRNA"/>
</dbReference>
<dbReference type="CCDS" id="CCDS28202.1">
    <molecule id="Q8K1N2-1"/>
</dbReference>
<dbReference type="CCDS" id="CCDS57031.1">
    <molecule id="Q8K1N2-2"/>
</dbReference>
<dbReference type="RefSeq" id="NP_001239371.1">
    <molecule id="Q8K1N2-2"/>
    <property type="nucleotide sequence ID" value="NM_001252442.1"/>
</dbReference>
<dbReference type="RefSeq" id="NP_700461.2">
    <molecule id="Q8K1N2-1"/>
    <property type="nucleotide sequence ID" value="NM_153412.4"/>
</dbReference>
<dbReference type="SMR" id="Q8K1N2"/>
<dbReference type="BioGRID" id="228960">
    <property type="interactions" value="4"/>
</dbReference>
<dbReference type="FunCoup" id="Q8K1N2">
    <property type="interactions" value="1191"/>
</dbReference>
<dbReference type="IntAct" id="Q8K1N2">
    <property type="interactions" value="3"/>
</dbReference>
<dbReference type="STRING" id="10090.ENSMUSP00000075672"/>
<dbReference type="GlyGen" id="Q8K1N2">
    <property type="glycosylation" value="2 sites, 1 O-linked glycan (2 sites)"/>
</dbReference>
<dbReference type="iPTMnet" id="Q8K1N2"/>
<dbReference type="PhosphoSitePlus" id="Q8K1N2"/>
<dbReference type="jPOST" id="Q8K1N2"/>
<dbReference type="PaxDb" id="10090-ENSMUSP00000046496"/>
<dbReference type="PeptideAtlas" id="Q8K1N2"/>
<dbReference type="ProteomicsDB" id="287710">
    <molecule id="Q8K1N2-1"/>
</dbReference>
<dbReference type="ProteomicsDB" id="287711">
    <molecule id="Q8K1N2-2"/>
</dbReference>
<dbReference type="Pumba" id="Q8K1N2"/>
<dbReference type="Antibodypedia" id="34806">
    <property type="antibodies" value="42 antibodies from 11 providers"/>
</dbReference>
<dbReference type="DNASU" id="208177"/>
<dbReference type="Ensembl" id="ENSMUST00000036355.13">
    <molecule id="Q8K1N2-1"/>
    <property type="protein sequence ID" value="ENSMUSP00000046496.7"/>
    <property type="gene ID" value="ENSMUSG00000033149.18"/>
</dbReference>
<dbReference type="Ensembl" id="ENSMUST00000076333.12">
    <molecule id="Q8K1N2-2"/>
    <property type="protein sequence ID" value="ENSMUSP00000075672.6"/>
    <property type="gene ID" value="ENSMUSG00000033149.18"/>
</dbReference>
<dbReference type="GeneID" id="208177"/>
<dbReference type="KEGG" id="mmu:208177"/>
<dbReference type="UCSC" id="uc007zjb.3">
    <molecule id="Q8K1N2-2"/>
    <property type="organism name" value="mouse"/>
</dbReference>
<dbReference type="UCSC" id="uc012agj.2">
    <molecule id="Q8K1N2-1"/>
    <property type="organism name" value="mouse"/>
</dbReference>
<dbReference type="AGR" id="MGI:2444981"/>
<dbReference type="CTD" id="90102"/>
<dbReference type="MGI" id="MGI:2444981">
    <property type="gene designation" value="Phldb2"/>
</dbReference>
<dbReference type="VEuPathDB" id="HostDB:ENSMUSG00000033149"/>
<dbReference type="eggNOG" id="ENOG502QUWG">
    <property type="taxonomic scope" value="Eukaryota"/>
</dbReference>
<dbReference type="GeneTree" id="ENSGT00940000156371"/>
<dbReference type="HOGENOM" id="CLU_003180_3_0_1"/>
<dbReference type="InParanoid" id="Q8K1N2"/>
<dbReference type="OMA" id="DESSREX"/>
<dbReference type="PhylomeDB" id="Q8K1N2"/>
<dbReference type="TreeFam" id="TF329165"/>
<dbReference type="BioGRID-ORCS" id="208177">
    <property type="hits" value="2 hits in 79 CRISPR screens"/>
</dbReference>
<dbReference type="ChiTaRS" id="Phldb2">
    <property type="organism name" value="mouse"/>
</dbReference>
<dbReference type="PRO" id="PR:Q8K1N2"/>
<dbReference type="Proteomes" id="UP000000589">
    <property type="component" value="Chromosome 16"/>
</dbReference>
<dbReference type="RNAct" id="Q8K1N2">
    <property type="molecule type" value="protein"/>
</dbReference>
<dbReference type="Bgee" id="ENSMUSG00000033149">
    <property type="expression patterns" value="Expressed in undifferentiated genital tubercle and 227 other cell types or tissues"/>
</dbReference>
<dbReference type="ExpressionAtlas" id="Q8K1N2">
    <property type="expression patterns" value="baseline and differential"/>
</dbReference>
<dbReference type="GO" id="GO:0045180">
    <property type="term" value="C:basal cortex"/>
    <property type="evidence" value="ECO:0007669"/>
    <property type="project" value="Ensembl"/>
</dbReference>
<dbReference type="GO" id="GO:0031252">
    <property type="term" value="C:cell leading edge"/>
    <property type="evidence" value="ECO:0007669"/>
    <property type="project" value="Ensembl"/>
</dbReference>
<dbReference type="GO" id="GO:0042995">
    <property type="term" value="C:cell projection"/>
    <property type="evidence" value="ECO:0007669"/>
    <property type="project" value="UniProtKB-KW"/>
</dbReference>
<dbReference type="GO" id="GO:0005829">
    <property type="term" value="C:cytosol"/>
    <property type="evidence" value="ECO:0007669"/>
    <property type="project" value="Ensembl"/>
</dbReference>
<dbReference type="GO" id="GO:0005925">
    <property type="term" value="C:focal adhesion"/>
    <property type="evidence" value="ECO:0007669"/>
    <property type="project" value="Ensembl"/>
</dbReference>
<dbReference type="GO" id="GO:0045111">
    <property type="term" value="C:intermediate filament cytoskeleton"/>
    <property type="evidence" value="ECO:0007669"/>
    <property type="project" value="Ensembl"/>
</dbReference>
<dbReference type="GO" id="GO:0005886">
    <property type="term" value="C:plasma membrane"/>
    <property type="evidence" value="ECO:0007669"/>
    <property type="project" value="Ensembl"/>
</dbReference>
<dbReference type="GO" id="GO:0002102">
    <property type="term" value="C:podosome"/>
    <property type="evidence" value="ECO:0000250"/>
    <property type="project" value="UniProtKB"/>
</dbReference>
<dbReference type="GO" id="GO:0071711">
    <property type="term" value="P:basement membrane organization"/>
    <property type="evidence" value="ECO:0007669"/>
    <property type="project" value="Ensembl"/>
</dbReference>
<dbReference type="GO" id="GO:0016477">
    <property type="term" value="P:cell migration"/>
    <property type="evidence" value="ECO:0000316"/>
    <property type="project" value="MGI"/>
</dbReference>
<dbReference type="GO" id="GO:0030010">
    <property type="term" value="P:establishment of cell polarity"/>
    <property type="evidence" value="ECO:0000316"/>
    <property type="project" value="MGI"/>
</dbReference>
<dbReference type="GO" id="GO:0045184">
    <property type="term" value="P:establishment of protein localization"/>
    <property type="evidence" value="ECO:0007669"/>
    <property type="project" value="Ensembl"/>
</dbReference>
<dbReference type="GO" id="GO:0000226">
    <property type="term" value="P:microtubule cytoskeleton organization"/>
    <property type="evidence" value="ECO:0007669"/>
    <property type="project" value="Ensembl"/>
</dbReference>
<dbReference type="GO" id="GO:0051895">
    <property type="term" value="P:negative regulation of focal adhesion assembly"/>
    <property type="evidence" value="ECO:0007669"/>
    <property type="project" value="Ensembl"/>
</dbReference>
<dbReference type="GO" id="GO:0051497">
    <property type="term" value="P:negative regulation of stress fiber assembly"/>
    <property type="evidence" value="ECO:0007669"/>
    <property type="project" value="Ensembl"/>
</dbReference>
<dbReference type="GO" id="GO:1903690">
    <property type="term" value="P:negative regulation of wound healing, spreading of epidermal cells"/>
    <property type="evidence" value="ECO:0007669"/>
    <property type="project" value="Ensembl"/>
</dbReference>
<dbReference type="CDD" id="cd14673">
    <property type="entry name" value="PH_PHLDB1_2"/>
    <property type="match status" value="1"/>
</dbReference>
<dbReference type="FunFam" id="2.30.29.30:FF:000006">
    <property type="entry name" value="Pleckstrin homology like domain family B member 1"/>
    <property type="match status" value="1"/>
</dbReference>
<dbReference type="Gene3D" id="2.30.29.30">
    <property type="entry name" value="Pleckstrin-homology domain (PH domain)/Phosphotyrosine-binding domain (PTB)"/>
    <property type="match status" value="1"/>
</dbReference>
<dbReference type="InterPro" id="IPR011993">
    <property type="entry name" value="PH-like_dom_sf"/>
</dbReference>
<dbReference type="InterPro" id="IPR052212">
    <property type="entry name" value="PH-like_domain"/>
</dbReference>
<dbReference type="InterPro" id="IPR001849">
    <property type="entry name" value="PH_domain"/>
</dbReference>
<dbReference type="InterPro" id="IPR037810">
    <property type="entry name" value="PHLDB1/2/3_PH"/>
</dbReference>
<dbReference type="PANTHER" id="PTHR12156:SF21">
    <property type="entry name" value="PLECKSTRIN HOMOLOGY-LIKE DOMAIN FAMILY B MEMBER 2"/>
    <property type="match status" value="1"/>
</dbReference>
<dbReference type="PANTHER" id="PTHR12156">
    <property type="entry name" value="PLECKSTRIN HOMOLOGY-LIKE DOMAIN, FAMILY B, MEMBER 3"/>
    <property type="match status" value="1"/>
</dbReference>
<dbReference type="Pfam" id="PF00169">
    <property type="entry name" value="PH"/>
    <property type="match status" value="1"/>
</dbReference>
<dbReference type="SMART" id="SM00233">
    <property type="entry name" value="PH"/>
    <property type="match status" value="1"/>
</dbReference>
<dbReference type="SUPFAM" id="SSF50729">
    <property type="entry name" value="PH domain-like"/>
    <property type="match status" value="1"/>
</dbReference>
<dbReference type="PROSITE" id="PS50003">
    <property type="entry name" value="PH_DOMAIN"/>
    <property type="match status" value="1"/>
</dbReference>
<evidence type="ECO:0000250" key="1"/>
<evidence type="ECO:0000250" key="2">
    <source>
        <dbReference type="UniProtKB" id="Q86SQ0"/>
    </source>
</evidence>
<evidence type="ECO:0000255" key="3"/>
<evidence type="ECO:0000255" key="4">
    <source>
        <dbReference type="PROSITE-ProRule" id="PRU00145"/>
    </source>
</evidence>
<evidence type="ECO:0000256" key="5">
    <source>
        <dbReference type="SAM" id="MobiDB-lite"/>
    </source>
</evidence>
<evidence type="ECO:0000269" key="6">
    <source>
    </source>
</evidence>
<evidence type="ECO:0000269" key="7">
    <source>
    </source>
</evidence>
<evidence type="ECO:0000303" key="8">
    <source>
    </source>
</evidence>
<evidence type="ECO:0000305" key="9"/>
<evidence type="ECO:0007744" key="10">
    <source>
    </source>
</evidence>
<evidence type="ECO:0007744" key="11">
    <source>
    </source>
</evidence>
<evidence type="ECO:0007744" key="12">
    <source>
    </source>
</evidence>
<name>PHLB2_MOUSE</name>
<sequence length="1249" mass="141486">MAEDSHMQKQLEFQNGSLEEGFVVRSLENEPQNMMESLSPRKYSSSLKFKANGDYSGSYLTLSQPVSAKRSPSPMGTSVRSSPSLAKIQGSKQFCDGIDKNISMKPPISFLSSAASLGGYPLGKADLDHYTGRDSERSTRLSEKPPYSRYSSRNKSHDSVYFLGGLEGRKTSGSLLTMWNGNSLSCTGSSPISRSGAASMPSSPKQVRKMNLQDHSTLQPRLSRHKEPASENVSVRTRKYSGSSLSNMGAYSRSLPRLYKATDNQMSPLSLPPRSSLGNSRRGQLGEKDLPHSLVDSDNYLNFSSLSSGASPYKTCLSEGNPYVSSALSVPASPRVARKMLLASTSSDDFDRASYSGTSPSHSFISGEPDRVLVARRNFSCGSMELDDSDLESLRQSSETPQPVLRERKSSISSISGRDDLMDYHRRQREERLREQEMERLERQRLETILSLCAEYTKPEGRRLSAGTTVADVQKINKELEKLQLSDEESVFEDALVCPDARYRCHRKGSLQDVDVAGFGNLGHSASFLAPRGSRSDELLGDLTRTPPSSSAAFLKATNESSYLSILPKTPEDIGEEQRTQELAAMEDARMVILNNLEELEQKIKDINDQMDESSRELDMECALLDGEQKSETAELMKEKEILDHLNRKITELEKNIVGEKTKEKVKLDAEREKLERLQELYSEQKTQLDNCPESMREQLQQQLKRDADLLDVESKHFEDLEFQQLEHESRLDEEKENLTQQLLREVAEYQRNIVARKEKISALKKQASHIVQQAQREQDHFVKEKNNLIMMLQREKENLCNLEKKYSSLTGGKGFPINPNTLKEGYISVNEINESCGNSTNLSPSTQFPADADAAVTEPALAVPVSQPQSSEHFRSLEERKKQHKEGLYLSDTLPRKKTTPSLSPHFSSATMGRSTTPKAHLPLGQSNSCGSVLPHSLATMTKDSESRRMLRGYNHQQMSEGQRQKPEFYSRTASESNVYLNSFHYPDRSYKDQAYDTLSLDSSDSMETSISACSPDNISSASTSNIARIEEMERLLKQAHAEKTRLLESREREMEAKKRALEEEKRRREILEKRLQEETSQRQKLIEKEVKIREKQRAQARPLTRYLPVRKEDFDLRSHVETAGHNIDTCFHVSITEKTCRGYLIKMGGKIKTWKKRWFVFDRNKRTFSYYADKHEAKLKGVIYFQAIEEVYYDHLKNANKSPNPLLTFSVKTHDRIYYMVAPSPEAMRIWMDVIVTGAEGYTHFLL</sequence>
<gene>
    <name type="primary">Phldb2</name>
    <name type="synonym">Ll5b</name>
</gene>
<organism>
    <name type="scientific">Mus musculus</name>
    <name type="common">Mouse</name>
    <dbReference type="NCBI Taxonomy" id="10090"/>
    <lineage>
        <taxon>Eukaryota</taxon>
        <taxon>Metazoa</taxon>
        <taxon>Chordata</taxon>
        <taxon>Craniata</taxon>
        <taxon>Vertebrata</taxon>
        <taxon>Euteleostomi</taxon>
        <taxon>Mammalia</taxon>
        <taxon>Eutheria</taxon>
        <taxon>Euarchontoglires</taxon>
        <taxon>Glires</taxon>
        <taxon>Rodentia</taxon>
        <taxon>Myomorpha</taxon>
        <taxon>Muroidea</taxon>
        <taxon>Muridae</taxon>
        <taxon>Murinae</taxon>
        <taxon>Mus</taxon>
        <taxon>Mus</taxon>
    </lineage>
</organism>
<proteinExistence type="evidence at protein level"/>
<keyword id="KW-0025">Alternative splicing</keyword>
<keyword id="KW-0965">Cell junction</keyword>
<keyword id="KW-0966">Cell projection</keyword>
<keyword id="KW-0175">Coiled coil</keyword>
<keyword id="KW-0963">Cytoplasm</keyword>
<keyword id="KW-0903">Direct protein sequencing</keyword>
<keyword id="KW-0472">Membrane</keyword>
<keyword id="KW-0597">Phosphoprotein</keyword>
<keyword id="KW-1185">Reference proteome</keyword>
<accession>Q8K1N2</accession>
<accession>Q3TNI3</accession>
<accession>Q80Y16</accession>
<accession>Q8BKV3</accession>
<comment type="function">
    <text evidence="6">Seems to be involved in the assembly of the postsynaptic apparatus. May play a role in acetyl-choline receptor (AChR) aggregation in the postsynaptic membrane.</text>
</comment>
<comment type="subunit">
    <text evidence="2">Interacts with FLNC (By similarity). Interacts with AMOTL2; interaction may facilitate PHLDB2 localization to the myotube podosome cortex that surrounds the core (By similarity). Part of a cortical microtubule stabilization complex (CMSC) composed of KANK1, PPFIA1, PPFIBP1, ERC1/ELKS, PHLDB2/LL5beta, CLASPs, KIF21A and possibly additional interactors; within CMSCs KANK1 and PHLDB2/LL5beta appear to be the core components for targeting of microtubule-binding proteins KIF21A and CLASPs, whereas PPFIA1, PPFIBP1 and ERC1/ELKS serve as scaffolds for protein clustering.</text>
</comment>
<comment type="subcellular location">
    <subcellularLocation>
        <location evidence="2">Cytoplasm</location>
    </subcellularLocation>
    <subcellularLocation>
        <location evidence="2">Membrane</location>
        <topology evidence="2">Peripheral membrane protein</topology>
    </subcellularLocation>
    <subcellularLocation>
        <location evidence="7">Cell projection</location>
        <location evidence="7">Podosome</location>
    </subcellularLocation>
    <subcellularLocation>
        <location evidence="2">Cytoplasm</location>
        <location evidence="2">Cell cortex</location>
    </subcellularLocation>
    <text evidence="1 7">Translocates to the plasma membrane at high levels of PtdIns(3,4,5)P3. At low levels of PtdIns(3,4,5)P3 is translocated to vesicular compartments (By similarity). Localized to the myotube podosome cortex that surrounds the core (PubMed:23525008).</text>
</comment>
<comment type="alternative products">
    <event type="alternative splicing"/>
    <isoform>
        <id>Q8K1N2-1</id>
        <name>1</name>
        <sequence type="displayed"/>
    </isoform>
    <isoform>
        <id>Q8K1N2-2</id>
        <name>2</name>
        <sequence type="described" ref="VSP_016746"/>
    </isoform>
</comment>
<comment type="tissue specificity">
    <text evidence="6">Expressed at postsynaptic membranes of skeletal neuromuscular junctions (at protein level).</text>
</comment>
<comment type="developmental stage">
    <text evidence="6">In synapses, is expressed at embryonic day 15 and colocalizes with acetyl-choline receptor at prenatal day 4. Expression decreases in adult.</text>
</comment>
<comment type="domain">
    <text evidence="1">The PH domain mediates the binding to phosphoinositides.</text>
</comment>
<reference key="1">
    <citation type="submission" date="2002-04" db="EMBL/GenBank/DDBJ databases">
        <authorList>
            <person name="Guo J.H."/>
            <person name="Yu L."/>
        </authorList>
    </citation>
    <scope>NUCLEOTIDE SEQUENCE [LARGE SCALE MRNA] (ISOFORM 1)</scope>
    <source>
        <strain>BALB/cJ</strain>
    </source>
</reference>
<reference key="2">
    <citation type="journal article" date="2004" name="Genome Res.">
        <title>The status, quality, and expansion of the NIH full-length cDNA project: the Mammalian Gene Collection (MGC).</title>
        <authorList>
            <consortium name="The MGC Project Team"/>
        </authorList>
    </citation>
    <scope>NUCLEOTIDE SEQUENCE [LARGE SCALE MRNA] (ISOFORM 2)</scope>
    <source>
        <strain>C57BL/6J</strain>
        <tissue>Brain</tissue>
    </source>
</reference>
<reference key="3">
    <citation type="journal article" date="2005" name="Science">
        <title>The transcriptional landscape of the mammalian genome.</title>
        <authorList>
            <person name="Carninci P."/>
            <person name="Kasukawa T."/>
            <person name="Katayama S."/>
            <person name="Gough J."/>
            <person name="Frith M.C."/>
            <person name="Maeda N."/>
            <person name="Oyama R."/>
            <person name="Ravasi T."/>
            <person name="Lenhard B."/>
            <person name="Wells C."/>
            <person name="Kodzius R."/>
            <person name="Shimokawa K."/>
            <person name="Bajic V.B."/>
            <person name="Brenner S.E."/>
            <person name="Batalov S."/>
            <person name="Forrest A.R."/>
            <person name="Zavolan M."/>
            <person name="Davis M.J."/>
            <person name="Wilming L.G."/>
            <person name="Aidinis V."/>
            <person name="Allen J.E."/>
            <person name="Ambesi-Impiombato A."/>
            <person name="Apweiler R."/>
            <person name="Aturaliya R.N."/>
            <person name="Bailey T.L."/>
            <person name="Bansal M."/>
            <person name="Baxter L."/>
            <person name="Beisel K.W."/>
            <person name="Bersano T."/>
            <person name="Bono H."/>
            <person name="Chalk A.M."/>
            <person name="Chiu K.P."/>
            <person name="Choudhary V."/>
            <person name="Christoffels A."/>
            <person name="Clutterbuck D.R."/>
            <person name="Crowe M.L."/>
            <person name="Dalla E."/>
            <person name="Dalrymple B.P."/>
            <person name="de Bono B."/>
            <person name="Della Gatta G."/>
            <person name="di Bernardo D."/>
            <person name="Down T."/>
            <person name="Engstrom P."/>
            <person name="Fagiolini M."/>
            <person name="Faulkner G."/>
            <person name="Fletcher C.F."/>
            <person name="Fukushima T."/>
            <person name="Furuno M."/>
            <person name="Futaki S."/>
            <person name="Gariboldi M."/>
            <person name="Georgii-Hemming P."/>
            <person name="Gingeras T.R."/>
            <person name="Gojobori T."/>
            <person name="Green R.E."/>
            <person name="Gustincich S."/>
            <person name="Harbers M."/>
            <person name="Hayashi Y."/>
            <person name="Hensch T.K."/>
            <person name="Hirokawa N."/>
            <person name="Hill D."/>
            <person name="Huminiecki L."/>
            <person name="Iacono M."/>
            <person name="Ikeo K."/>
            <person name="Iwama A."/>
            <person name="Ishikawa T."/>
            <person name="Jakt M."/>
            <person name="Kanapin A."/>
            <person name="Katoh M."/>
            <person name="Kawasawa Y."/>
            <person name="Kelso J."/>
            <person name="Kitamura H."/>
            <person name="Kitano H."/>
            <person name="Kollias G."/>
            <person name="Krishnan S.P."/>
            <person name="Kruger A."/>
            <person name="Kummerfeld S.K."/>
            <person name="Kurochkin I.V."/>
            <person name="Lareau L.F."/>
            <person name="Lazarevic D."/>
            <person name="Lipovich L."/>
            <person name="Liu J."/>
            <person name="Liuni S."/>
            <person name="McWilliam S."/>
            <person name="Madan Babu M."/>
            <person name="Madera M."/>
            <person name="Marchionni L."/>
            <person name="Matsuda H."/>
            <person name="Matsuzawa S."/>
            <person name="Miki H."/>
            <person name="Mignone F."/>
            <person name="Miyake S."/>
            <person name="Morris K."/>
            <person name="Mottagui-Tabar S."/>
            <person name="Mulder N."/>
            <person name="Nakano N."/>
            <person name="Nakauchi H."/>
            <person name="Ng P."/>
            <person name="Nilsson R."/>
            <person name="Nishiguchi S."/>
            <person name="Nishikawa S."/>
            <person name="Nori F."/>
            <person name="Ohara O."/>
            <person name="Okazaki Y."/>
            <person name="Orlando V."/>
            <person name="Pang K.C."/>
            <person name="Pavan W.J."/>
            <person name="Pavesi G."/>
            <person name="Pesole G."/>
            <person name="Petrovsky N."/>
            <person name="Piazza S."/>
            <person name="Reed J."/>
            <person name="Reid J.F."/>
            <person name="Ring B.Z."/>
            <person name="Ringwald M."/>
            <person name="Rost B."/>
            <person name="Ruan Y."/>
            <person name="Salzberg S.L."/>
            <person name="Sandelin A."/>
            <person name="Schneider C."/>
            <person name="Schoenbach C."/>
            <person name="Sekiguchi K."/>
            <person name="Semple C.A."/>
            <person name="Seno S."/>
            <person name="Sessa L."/>
            <person name="Sheng Y."/>
            <person name="Shibata Y."/>
            <person name="Shimada H."/>
            <person name="Shimada K."/>
            <person name="Silva D."/>
            <person name="Sinclair B."/>
            <person name="Sperling S."/>
            <person name="Stupka E."/>
            <person name="Sugiura K."/>
            <person name="Sultana R."/>
            <person name="Takenaka Y."/>
            <person name="Taki K."/>
            <person name="Tammoja K."/>
            <person name="Tan S.L."/>
            <person name="Tang S."/>
            <person name="Taylor M.S."/>
            <person name="Tegner J."/>
            <person name="Teichmann S.A."/>
            <person name="Ueda H.R."/>
            <person name="van Nimwegen E."/>
            <person name="Verardo R."/>
            <person name="Wei C.L."/>
            <person name="Yagi K."/>
            <person name="Yamanishi H."/>
            <person name="Zabarovsky E."/>
            <person name="Zhu S."/>
            <person name="Zimmer A."/>
            <person name="Hide W."/>
            <person name="Bult C."/>
            <person name="Grimmond S.M."/>
            <person name="Teasdale R.D."/>
            <person name="Liu E.T."/>
            <person name="Brusic V."/>
            <person name="Quackenbush J."/>
            <person name="Wahlestedt C."/>
            <person name="Mattick J.S."/>
            <person name="Hume D.A."/>
            <person name="Kai C."/>
            <person name="Sasaki D."/>
            <person name="Tomaru Y."/>
            <person name="Fukuda S."/>
            <person name="Kanamori-Katayama M."/>
            <person name="Suzuki M."/>
            <person name="Aoki J."/>
            <person name="Arakawa T."/>
            <person name="Iida J."/>
            <person name="Imamura K."/>
            <person name="Itoh M."/>
            <person name="Kato T."/>
            <person name="Kawaji H."/>
            <person name="Kawagashira N."/>
            <person name="Kawashima T."/>
            <person name="Kojima M."/>
            <person name="Kondo S."/>
            <person name="Konno H."/>
            <person name="Nakano K."/>
            <person name="Ninomiya N."/>
            <person name="Nishio T."/>
            <person name="Okada M."/>
            <person name="Plessy C."/>
            <person name="Shibata K."/>
            <person name="Shiraki T."/>
            <person name="Suzuki S."/>
            <person name="Tagami M."/>
            <person name="Waki K."/>
            <person name="Watahiki A."/>
            <person name="Okamura-Oho Y."/>
            <person name="Suzuki H."/>
            <person name="Kawai J."/>
            <person name="Hayashizaki Y."/>
        </authorList>
    </citation>
    <scope>NUCLEOTIDE SEQUENCE [LARGE SCALE MRNA] OF 1-793 (ISOFORM 1)</scope>
    <source>
        <strain>C57BL/6J</strain>
        <tissue>Spleen</tissue>
    </source>
</reference>
<reference key="4">
    <citation type="submission" date="2007-04" db="UniProtKB">
        <authorList>
            <person name="Lubec G."/>
            <person name="Kang S.U."/>
        </authorList>
    </citation>
    <scope>PROTEIN SEQUENCE OF 570-579 AND 698-705</scope>
    <scope>IDENTIFICATION BY MASS SPECTROMETRY</scope>
    <source>
        <strain>C57BL/6J</strain>
        <tissue>Brain</tissue>
    </source>
</reference>
<reference key="5">
    <citation type="journal article" date="2005" name="J. Cell Biol.">
        <title>LL5beta: a regulator of postsynaptic differentiation identified in a screen for synaptically enriched transcripts at the neuromuscular junction.</title>
        <authorList>
            <person name="Kishi M."/>
            <person name="Kummer T.T."/>
            <person name="Eglen S.J."/>
            <person name="Sanes J.R."/>
        </authorList>
    </citation>
    <scope>FUNCTION</scope>
    <scope>TISSUE SPECIFICITY</scope>
    <scope>DEVELOPMENTAL STAGE</scope>
</reference>
<reference key="6">
    <citation type="journal article" date="2007" name="Proc. Natl. Acad. Sci. U.S.A.">
        <title>Large-scale phosphorylation analysis of mouse liver.</title>
        <authorList>
            <person name="Villen J."/>
            <person name="Beausoleil S.A."/>
            <person name="Gerber S.A."/>
            <person name="Gygi S.P."/>
        </authorList>
    </citation>
    <scope>PHOSPHORYLATION [LARGE SCALE ANALYSIS] AT SER-510 AND THR-546</scope>
    <scope>IDENTIFICATION BY MASS SPECTROMETRY [LARGE SCALE ANALYSIS]</scope>
    <source>
        <tissue>Liver</tissue>
    </source>
</reference>
<reference key="7">
    <citation type="journal article" date="2009" name="Mol. Cell. Proteomics">
        <title>Large scale localization of protein phosphorylation by use of electron capture dissociation mass spectrometry.</title>
        <authorList>
            <person name="Sweet S.M."/>
            <person name="Bailey C.M."/>
            <person name="Cunningham D.L."/>
            <person name="Heath J.K."/>
            <person name="Cooper H.J."/>
        </authorList>
    </citation>
    <scope>PHOSPHORYLATION [LARGE SCALE ANALYSIS] AT SER-465 AND SER-510</scope>
    <scope>IDENTIFICATION BY MASS SPECTROMETRY [LARGE SCALE ANALYSIS]</scope>
    <source>
        <tissue>Embryonic fibroblast</tissue>
    </source>
</reference>
<reference key="8">
    <citation type="journal article" date="2010" name="Cell">
        <title>A tissue-specific atlas of mouse protein phosphorylation and expression.</title>
        <authorList>
            <person name="Huttlin E.L."/>
            <person name="Jedrychowski M.P."/>
            <person name="Elias J.E."/>
            <person name="Goswami T."/>
            <person name="Rad R."/>
            <person name="Beausoleil S.A."/>
            <person name="Villen J."/>
            <person name="Haas W."/>
            <person name="Sowa M.E."/>
            <person name="Gygi S.P."/>
        </authorList>
    </citation>
    <scope>PHOSPHORYLATION [LARGE SCALE ANALYSIS] AT SER-203; SER-241; SER-244; SER-329; SER-333; SER-347; SER-380; SER-383; SER-389; SER-465; SER-486; SER-510 AND THR-546</scope>
    <scope>IDENTIFICATION BY MASS SPECTROMETRY [LARGE SCALE ANALYSIS]</scope>
    <source>
        <tissue>Brain</tissue>
        <tissue>Brown adipose tissue</tissue>
        <tissue>Heart</tissue>
        <tissue>Kidney</tissue>
        <tissue>Liver</tissue>
        <tissue>Lung</tissue>
        <tissue>Pancreas</tissue>
        <tissue>Spleen</tissue>
        <tissue>Testis</tissue>
    </source>
</reference>
<reference key="9">
    <citation type="journal article" date="2013" name="J. Cell Sci.">
        <title>Amotl2 interacts with LL5beta, localizes to podosomes and regulates postsynaptic differentiation in muscle.</title>
        <authorList>
            <person name="Proszynski T.J."/>
            <person name="Sanes J.R."/>
        </authorList>
    </citation>
    <scope>SUBCELLULAR LOCATION</scope>
</reference>
<feature type="chain" id="PRO_0000053895" description="Pleckstrin homology-like domain family B member 2">
    <location>
        <begin position="1"/>
        <end position="1249"/>
    </location>
</feature>
<feature type="domain" description="PH" evidence="4">
    <location>
        <begin position="1139"/>
        <end position="1242"/>
    </location>
</feature>
<feature type="region of interest" description="Disordered" evidence="5">
    <location>
        <begin position="64"/>
        <end position="85"/>
    </location>
</feature>
<feature type="region of interest" description="Disordered" evidence="5">
    <location>
        <begin position="128"/>
        <end position="154"/>
    </location>
</feature>
<feature type="region of interest" description="Disordered" evidence="5">
    <location>
        <begin position="190"/>
        <end position="248"/>
    </location>
</feature>
<feature type="region of interest" description="Disordered" evidence="5">
    <location>
        <begin position="264"/>
        <end position="289"/>
    </location>
</feature>
<feature type="region of interest" description="Disordered" evidence="5">
    <location>
        <begin position="388"/>
        <end position="424"/>
    </location>
</feature>
<feature type="region of interest" description="Disordered" evidence="5">
    <location>
        <begin position="866"/>
        <end position="934"/>
    </location>
</feature>
<feature type="coiled-coil region" evidence="3">
    <location>
        <begin position="580"/>
        <end position="692"/>
    </location>
</feature>
<feature type="coiled-coil region" evidence="3">
    <location>
        <begin position="718"/>
        <end position="803"/>
    </location>
</feature>
<feature type="coiled-coil region" evidence="3">
    <location>
        <begin position="1028"/>
        <end position="1094"/>
    </location>
</feature>
<feature type="compositionally biased region" description="Polar residues" evidence="5">
    <location>
        <begin position="74"/>
        <end position="84"/>
    </location>
</feature>
<feature type="compositionally biased region" description="Basic and acidic residues" evidence="5">
    <location>
        <begin position="128"/>
        <end position="143"/>
    </location>
</feature>
<feature type="compositionally biased region" description="Polar residues" evidence="5">
    <location>
        <begin position="231"/>
        <end position="248"/>
    </location>
</feature>
<feature type="compositionally biased region" description="Low complexity" evidence="5">
    <location>
        <begin position="267"/>
        <end position="283"/>
    </location>
</feature>
<feature type="compositionally biased region" description="Basic and acidic residues" evidence="5">
    <location>
        <begin position="873"/>
        <end position="888"/>
    </location>
</feature>
<feature type="compositionally biased region" description="Polar residues" evidence="5">
    <location>
        <begin position="901"/>
        <end position="919"/>
    </location>
</feature>
<feature type="modified residue" description="Phosphoserine" evidence="2">
    <location>
        <position position="71"/>
    </location>
</feature>
<feature type="modified residue" description="Phosphoserine" evidence="2">
    <location>
        <position position="73"/>
    </location>
</feature>
<feature type="modified residue" description="Phosphoserine" evidence="2">
    <location>
        <position position="156"/>
    </location>
</feature>
<feature type="modified residue" description="Phosphoserine" evidence="12">
    <location>
        <position position="203"/>
    </location>
</feature>
<feature type="modified residue" description="Phosphoserine" evidence="12">
    <location>
        <position position="241"/>
    </location>
</feature>
<feature type="modified residue" description="Phosphoserine" evidence="12">
    <location>
        <position position="244"/>
    </location>
</feature>
<feature type="modified residue" description="Phosphoserine" evidence="12">
    <location>
        <position position="329"/>
    </location>
</feature>
<feature type="modified residue" description="Phosphoserine" evidence="12">
    <location>
        <position position="333"/>
    </location>
</feature>
<feature type="modified residue" description="Phosphoserine" evidence="12">
    <location>
        <position position="347"/>
    </location>
</feature>
<feature type="modified residue" description="Phosphoserine" evidence="12">
    <location>
        <position position="380"/>
    </location>
</feature>
<feature type="modified residue" description="Phosphoserine" evidence="12">
    <location>
        <position position="383"/>
    </location>
</feature>
<feature type="modified residue" description="Phosphoserine" evidence="12">
    <location>
        <position position="389"/>
    </location>
</feature>
<feature type="modified residue" description="Phosphoserine" evidence="2">
    <location>
        <position position="411"/>
    </location>
</feature>
<feature type="modified residue" description="Phosphoserine" evidence="2">
    <location>
        <position position="416"/>
    </location>
</feature>
<feature type="modified residue" description="Phosphoserine" evidence="11 12">
    <location>
        <position position="465"/>
    </location>
</feature>
<feature type="modified residue" description="Phosphoserine" evidence="12">
    <location>
        <position position="486"/>
    </location>
</feature>
<feature type="modified residue" description="Phosphoserine" evidence="10 11 12">
    <location>
        <position position="510"/>
    </location>
</feature>
<feature type="modified residue" description="Phosphothreonine" evidence="10 12">
    <location>
        <position position="546"/>
    </location>
</feature>
<feature type="modified residue" description="Phosphothreonine" evidence="2">
    <location>
        <position position="570"/>
    </location>
</feature>
<feature type="modified residue" description="Phosphothreonine" evidence="2">
    <location>
        <position position="894"/>
    </location>
</feature>
<feature type="splice variant" id="VSP_016746" description="In isoform 2." evidence="8">
    <original>VSQPQSSE</original>
    <variation>HRTAVYSGFMSPSTLSPSVTEPSSATWPEVMTTSVDPFPLNDTPPPLPAKKHRRQQPQEQQ</variation>
    <location>
        <begin position="866"/>
        <end position="873"/>
    </location>
</feature>
<feature type="sequence conflict" description="In Ref. 2; AAH50915/AAH60683." evidence="9" ref="2">
    <original>S</original>
    <variation>I</variation>
    <location>
        <position position="112"/>
    </location>
</feature>
<feature type="sequence conflict" description="In Ref. 1; AAM33635." evidence="9" ref="1">
    <original>R</original>
    <variation>M</variation>
    <location>
        <position position="504"/>
    </location>
</feature>
<feature type="sequence conflict" description="In Ref. 3; BAE38105." evidence="9" ref="3">
    <original>A</original>
    <variation>S</variation>
    <location>
        <position position="634"/>
    </location>
</feature>
<feature type="sequence conflict" description="In Ref. 1; AAM33635." evidence="9" ref="1">
    <original>Y</original>
    <variation>D</variation>
    <location>
        <position position="807"/>
    </location>
</feature>
<feature type="sequence conflict" description="In Ref. 1; AAM33635." evidence="9" ref="1">
    <original>H</original>
    <variation>P</variation>
    <location>
        <position position="1127"/>
    </location>
</feature>
<feature type="sequence conflict" description="In Ref. 1; AAM33635." evidence="9" ref="1">
    <original>T</original>
    <variation>P</variation>
    <location>
        <position position="1138"/>
    </location>
</feature>
<protein>
    <recommendedName>
        <fullName>Pleckstrin homology-like domain family B member 2</fullName>
    </recommendedName>
    <alternativeName>
        <fullName>Protein LL5-beta</fullName>
    </alternativeName>
</protein>